<organism>
    <name type="scientific">Streptococcus thermophilus (strain ATCC BAA-250 / LMG 18311)</name>
    <dbReference type="NCBI Taxonomy" id="264199"/>
    <lineage>
        <taxon>Bacteria</taxon>
        <taxon>Bacillati</taxon>
        <taxon>Bacillota</taxon>
        <taxon>Bacilli</taxon>
        <taxon>Lactobacillales</taxon>
        <taxon>Streptococcaceae</taxon>
        <taxon>Streptococcus</taxon>
    </lineage>
</organism>
<keyword id="KW-0021">Allosteric enzyme</keyword>
<keyword id="KW-0067">ATP-binding</keyword>
<keyword id="KW-0963">Cytoplasm</keyword>
<keyword id="KW-0418">Kinase</keyword>
<keyword id="KW-0547">Nucleotide-binding</keyword>
<keyword id="KW-0665">Pyrimidine biosynthesis</keyword>
<keyword id="KW-1185">Reference proteome</keyword>
<keyword id="KW-0808">Transferase</keyword>
<evidence type="ECO:0000255" key="1">
    <source>
        <dbReference type="HAMAP-Rule" id="MF_01220"/>
    </source>
</evidence>
<comment type="function">
    <text evidence="1">Catalyzes the reversible phosphorylation of UMP to UDP.</text>
</comment>
<comment type="catalytic activity">
    <reaction evidence="1">
        <text>UMP + ATP = UDP + ADP</text>
        <dbReference type="Rhea" id="RHEA:24400"/>
        <dbReference type="ChEBI" id="CHEBI:30616"/>
        <dbReference type="ChEBI" id="CHEBI:57865"/>
        <dbReference type="ChEBI" id="CHEBI:58223"/>
        <dbReference type="ChEBI" id="CHEBI:456216"/>
        <dbReference type="EC" id="2.7.4.22"/>
    </reaction>
</comment>
<comment type="activity regulation">
    <text evidence="1">Allosterically activated by GTP. Inhibited by UTP.</text>
</comment>
<comment type="pathway">
    <text evidence="1">Pyrimidine metabolism; CTP biosynthesis via de novo pathway; UDP from UMP (UMPK route): step 1/1.</text>
</comment>
<comment type="subunit">
    <text evidence="1">Homohexamer.</text>
</comment>
<comment type="subcellular location">
    <subcellularLocation>
        <location evidence="1">Cytoplasm</location>
    </subcellularLocation>
</comment>
<comment type="similarity">
    <text evidence="1">Belongs to the UMP kinase family.</text>
</comment>
<dbReference type="EC" id="2.7.4.22" evidence="1"/>
<dbReference type="EMBL" id="CP000023">
    <property type="protein sequence ID" value="AAV60151.1"/>
    <property type="molecule type" value="Genomic_DNA"/>
</dbReference>
<dbReference type="RefSeq" id="WP_011225564.1">
    <property type="nucleotide sequence ID" value="NC_006448.1"/>
</dbReference>
<dbReference type="SMR" id="Q5M5N0"/>
<dbReference type="STRING" id="264199.stu0438"/>
<dbReference type="KEGG" id="stl:stu0438"/>
<dbReference type="PATRIC" id="fig|264199.4.peg.440"/>
<dbReference type="eggNOG" id="COG0528">
    <property type="taxonomic scope" value="Bacteria"/>
</dbReference>
<dbReference type="HOGENOM" id="CLU_033861_0_0_9"/>
<dbReference type="UniPathway" id="UPA00159">
    <property type="reaction ID" value="UER00275"/>
</dbReference>
<dbReference type="Proteomes" id="UP000001170">
    <property type="component" value="Chromosome"/>
</dbReference>
<dbReference type="GO" id="GO:0005737">
    <property type="term" value="C:cytoplasm"/>
    <property type="evidence" value="ECO:0007669"/>
    <property type="project" value="UniProtKB-SubCell"/>
</dbReference>
<dbReference type="GO" id="GO:0005524">
    <property type="term" value="F:ATP binding"/>
    <property type="evidence" value="ECO:0007669"/>
    <property type="project" value="UniProtKB-KW"/>
</dbReference>
<dbReference type="GO" id="GO:0033862">
    <property type="term" value="F:UMP kinase activity"/>
    <property type="evidence" value="ECO:0007669"/>
    <property type="project" value="UniProtKB-EC"/>
</dbReference>
<dbReference type="GO" id="GO:0044210">
    <property type="term" value="P:'de novo' CTP biosynthetic process"/>
    <property type="evidence" value="ECO:0007669"/>
    <property type="project" value="UniProtKB-UniRule"/>
</dbReference>
<dbReference type="GO" id="GO:0006225">
    <property type="term" value="P:UDP biosynthetic process"/>
    <property type="evidence" value="ECO:0007669"/>
    <property type="project" value="TreeGrafter"/>
</dbReference>
<dbReference type="CDD" id="cd04254">
    <property type="entry name" value="AAK_UMPK-PyrH-Ec"/>
    <property type="match status" value="1"/>
</dbReference>
<dbReference type="FunFam" id="3.40.1160.10:FF:000019">
    <property type="entry name" value="Uridylate kinase"/>
    <property type="match status" value="1"/>
</dbReference>
<dbReference type="Gene3D" id="3.40.1160.10">
    <property type="entry name" value="Acetylglutamate kinase-like"/>
    <property type="match status" value="1"/>
</dbReference>
<dbReference type="HAMAP" id="MF_01220_B">
    <property type="entry name" value="PyrH_B"/>
    <property type="match status" value="1"/>
</dbReference>
<dbReference type="InterPro" id="IPR036393">
    <property type="entry name" value="AceGlu_kinase-like_sf"/>
</dbReference>
<dbReference type="InterPro" id="IPR001048">
    <property type="entry name" value="Asp/Glu/Uridylate_kinase"/>
</dbReference>
<dbReference type="InterPro" id="IPR011817">
    <property type="entry name" value="Uridylate_kinase"/>
</dbReference>
<dbReference type="InterPro" id="IPR015963">
    <property type="entry name" value="Uridylate_kinase_bac"/>
</dbReference>
<dbReference type="NCBIfam" id="TIGR02075">
    <property type="entry name" value="pyrH_bact"/>
    <property type="match status" value="1"/>
</dbReference>
<dbReference type="PANTHER" id="PTHR42833">
    <property type="entry name" value="URIDYLATE KINASE"/>
    <property type="match status" value="1"/>
</dbReference>
<dbReference type="PANTHER" id="PTHR42833:SF4">
    <property type="entry name" value="URIDYLATE KINASE PUMPKIN, CHLOROPLASTIC"/>
    <property type="match status" value="1"/>
</dbReference>
<dbReference type="Pfam" id="PF00696">
    <property type="entry name" value="AA_kinase"/>
    <property type="match status" value="1"/>
</dbReference>
<dbReference type="PIRSF" id="PIRSF005650">
    <property type="entry name" value="Uridylate_kin"/>
    <property type="match status" value="1"/>
</dbReference>
<dbReference type="SUPFAM" id="SSF53633">
    <property type="entry name" value="Carbamate kinase-like"/>
    <property type="match status" value="1"/>
</dbReference>
<name>PYRH_STRT2</name>
<sequence>MAEPKYKRVLIKLSGEALAGEKGVGIDLPTVQAIAKEIAEVADSGIQIALVIGGGNLWRGEPAAEAGMDRVQADYTGMLGTTMNALVMADSLKQLGVDTRVQTAIDMKSVAEPYIRGRALRHFEKGRIVIFAAGIGSPYFSTDTTAALRAAEIESDAILMAKNGVDGVYNDDPRKNADAVKFDKLTHVEVIKRGLKIIDATASTLSMDNDIDLVVFNMNEPGNIKRVIFGEQIGTTVSNKAELRK</sequence>
<accession>Q5M5N0</accession>
<proteinExistence type="inferred from homology"/>
<reference key="1">
    <citation type="journal article" date="2004" name="Nat. Biotechnol.">
        <title>Complete sequence and comparative genome analysis of the dairy bacterium Streptococcus thermophilus.</title>
        <authorList>
            <person name="Bolotin A."/>
            <person name="Quinquis B."/>
            <person name="Renault P."/>
            <person name="Sorokin A."/>
            <person name="Ehrlich S.D."/>
            <person name="Kulakauskas S."/>
            <person name="Lapidus A."/>
            <person name="Goltsman E."/>
            <person name="Mazur M."/>
            <person name="Pusch G.D."/>
            <person name="Fonstein M."/>
            <person name="Overbeek R."/>
            <person name="Kyprides N."/>
            <person name="Purnelle B."/>
            <person name="Prozzi D."/>
            <person name="Ngui K."/>
            <person name="Masuy D."/>
            <person name="Hancy F."/>
            <person name="Burteau S."/>
            <person name="Boutry M."/>
            <person name="Delcour J."/>
            <person name="Goffeau A."/>
            <person name="Hols P."/>
        </authorList>
    </citation>
    <scope>NUCLEOTIDE SEQUENCE [LARGE SCALE GENOMIC DNA]</scope>
    <source>
        <strain>ATCC BAA-250 / LMG 18311</strain>
    </source>
</reference>
<gene>
    <name evidence="1" type="primary">pyrH</name>
    <name type="ordered locus">stu0438</name>
</gene>
<protein>
    <recommendedName>
        <fullName evidence="1">Uridylate kinase</fullName>
        <shortName evidence="1">UK</shortName>
        <ecNumber evidence="1">2.7.4.22</ecNumber>
    </recommendedName>
    <alternativeName>
        <fullName evidence="1">Uridine monophosphate kinase</fullName>
        <shortName evidence="1">UMP kinase</shortName>
        <shortName evidence="1">UMPK</shortName>
    </alternativeName>
</protein>
<feature type="chain" id="PRO_1000054039" description="Uridylate kinase">
    <location>
        <begin position="1"/>
        <end position="245"/>
    </location>
</feature>
<feature type="region of interest" description="Involved in allosteric activation by GTP" evidence="1">
    <location>
        <begin position="20"/>
        <end position="25"/>
    </location>
</feature>
<feature type="binding site" evidence="1">
    <location>
        <begin position="12"/>
        <end position="15"/>
    </location>
    <ligand>
        <name>ATP</name>
        <dbReference type="ChEBI" id="CHEBI:30616"/>
    </ligand>
</feature>
<feature type="binding site" evidence="1">
    <location>
        <position position="54"/>
    </location>
    <ligand>
        <name>UMP</name>
        <dbReference type="ChEBI" id="CHEBI:57865"/>
    </ligand>
</feature>
<feature type="binding site" evidence="1">
    <location>
        <position position="55"/>
    </location>
    <ligand>
        <name>ATP</name>
        <dbReference type="ChEBI" id="CHEBI:30616"/>
    </ligand>
</feature>
<feature type="binding site" evidence="1">
    <location>
        <position position="59"/>
    </location>
    <ligand>
        <name>ATP</name>
        <dbReference type="ChEBI" id="CHEBI:30616"/>
    </ligand>
</feature>
<feature type="binding site" evidence="1">
    <location>
        <position position="74"/>
    </location>
    <ligand>
        <name>UMP</name>
        <dbReference type="ChEBI" id="CHEBI:57865"/>
    </ligand>
</feature>
<feature type="binding site" evidence="1">
    <location>
        <begin position="135"/>
        <end position="142"/>
    </location>
    <ligand>
        <name>UMP</name>
        <dbReference type="ChEBI" id="CHEBI:57865"/>
    </ligand>
</feature>
<feature type="binding site" evidence="1">
    <location>
        <position position="163"/>
    </location>
    <ligand>
        <name>ATP</name>
        <dbReference type="ChEBI" id="CHEBI:30616"/>
    </ligand>
</feature>
<feature type="binding site" evidence="1">
    <location>
        <position position="169"/>
    </location>
    <ligand>
        <name>ATP</name>
        <dbReference type="ChEBI" id="CHEBI:30616"/>
    </ligand>
</feature>
<feature type="binding site" evidence="1">
    <location>
        <position position="172"/>
    </location>
    <ligand>
        <name>ATP</name>
        <dbReference type="ChEBI" id="CHEBI:30616"/>
    </ligand>
</feature>